<sequence length="435" mass="47892">MTKCSFFRAILVAVGLMTAAVFATPANALVTLDIRKGNVQPMPIAVTDFQGDIGAQVSQVIAADLQRSGLFAPINKTAFIEKISNPDAAPRFEDWKVINAQALVTGRVSKEADGRLRAEFRLWDPFAGQQMTGQQFYTQPENWRRVAHIIADAIYKQITGEEGYFDTRVVFVSESGTKQQRKRQLAIMDQDGFNVRMLTDGSDLVLTPRFSPSRQEVTYMSFANQQPRVYLLQLETGQREVVGNFPGMTFSPRFSPDGQKVIMSLQQDANSNIYTMDLRSRTTTRLTSTAAIDTSPSYSPDGARVSFESDRGGKPQIYVMNADGSGQTRISFGDGSYSTPVWSPRGDLIAFTKQAGGKFSIGVMKPDGSGERILTTGFHNEGPTWAPNGRVLMFFRQAAGSGGPQLYSIDLTGYNEQLVKTPTYGSDPAWSPLME</sequence>
<feature type="signal peptide" evidence="1">
    <location>
        <begin position="1"/>
        <end position="28"/>
    </location>
</feature>
<feature type="chain" id="PRO_0000259077" description="Tol-Pal system protein TolB" evidence="1">
    <location>
        <begin position="29"/>
        <end position="435"/>
    </location>
</feature>
<feature type="region of interest" description="Disordered" evidence="2">
    <location>
        <begin position="288"/>
        <end position="310"/>
    </location>
</feature>
<gene>
    <name evidence="1" type="primary">tolB</name>
    <name type="ordered locus">RL3969</name>
</gene>
<organism>
    <name type="scientific">Rhizobium johnstonii (strain DSM 114642 / LMG 32736 / 3841)</name>
    <name type="common">Rhizobium leguminosarum bv. viciae</name>
    <dbReference type="NCBI Taxonomy" id="216596"/>
    <lineage>
        <taxon>Bacteria</taxon>
        <taxon>Pseudomonadati</taxon>
        <taxon>Pseudomonadota</taxon>
        <taxon>Alphaproteobacteria</taxon>
        <taxon>Hyphomicrobiales</taxon>
        <taxon>Rhizobiaceae</taxon>
        <taxon>Rhizobium/Agrobacterium group</taxon>
        <taxon>Rhizobium</taxon>
        <taxon>Rhizobium johnstonii</taxon>
    </lineage>
</organism>
<dbReference type="EMBL" id="AM236080">
    <property type="protein sequence ID" value="CAK09459.1"/>
    <property type="molecule type" value="Genomic_DNA"/>
</dbReference>
<dbReference type="RefSeq" id="WP_011653401.1">
    <property type="nucleotide sequence ID" value="NC_008380.1"/>
</dbReference>
<dbReference type="SMR" id="Q1MC72"/>
<dbReference type="EnsemblBacteria" id="CAK09459">
    <property type="protein sequence ID" value="CAK09459"/>
    <property type="gene ID" value="RL3969"/>
</dbReference>
<dbReference type="KEGG" id="rle:RL3969"/>
<dbReference type="eggNOG" id="COG0823">
    <property type="taxonomic scope" value="Bacteria"/>
</dbReference>
<dbReference type="HOGENOM" id="CLU_047123_0_0_5"/>
<dbReference type="Proteomes" id="UP000006575">
    <property type="component" value="Chromosome"/>
</dbReference>
<dbReference type="GO" id="GO:0042597">
    <property type="term" value="C:periplasmic space"/>
    <property type="evidence" value="ECO:0007669"/>
    <property type="project" value="UniProtKB-SubCell"/>
</dbReference>
<dbReference type="GO" id="GO:0051301">
    <property type="term" value="P:cell division"/>
    <property type="evidence" value="ECO:0007669"/>
    <property type="project" value="UniProtKB-UniRule"/>
</dbReference>
<dbReference type="GO" id="GO:0017038">
    <property type="term" value="P:protein import"/>
    <property type="evidence" value="ECO:0007669"/>
    <property type="project" value="InterPro"/>
</dbReference>
<dbReference type="Gene3D" id="2.120.10.30">
    <property type="entry name" value="TolB, C-terminal domain"/>
    <property type="match status" value="1"/>
</dbReference>
<dbReference type="Gene3D" id="3.40.50.10070">
    <property type="entry name" value="TolB, N-terminal domain"/>
    <property type="match status" value="1"/>
</dbReference>
<dbReference type="HAMAP" id="MF_00671">
    <property type="entry name" value="TolB"/>
    <property type="match status" value="1"/>
</dbReference>
<dbReference type="InterPro" id="IPR011042">
    <property type="entry name" value="6-blade_b-propeller_TolB-like"/>
</dbReference>
<dbReference type="InterPro" id="IPR011659">
    <property type="entry name" value="PD40"/>
</dbReference>
<dbReference type="InterPro" id="IPR014167">
    <property type="entry name" value="Tol-Pal_TolB"/>
</dbReference>
<dbReference type="InterPro" id="IPR007195">
    <property type="entry name" value="TolB_N"/>
</dbReference>
<dbReference type="NCBIfam" id="TIGR02800">
    <property type="entry name" value="propeller_TolB"/>
    <property type="match status" value="1"/>
</dbReference>
<dbReference type="PANTHER" id="PTHR36842:SF1">
    <property type="entry name" value="PROTEIN TOLB"/>
    <property type="match status" value="1"/>
</dbReference>
<dbReference type="PANTHER" id="PTHR36842">
    <property type="entry name" value="PROTEIN TOLB HOMOLOG"/>
    <property type="match status" value="1"/>
</dbReference>
<dbReference type="Pfam" id="PF07676">
    <property type="entry name" value="PD40"/>
    <property type="match status" value="3"/>
</dbReference>
<dbReference type="Pfam" id="PF04052">
    <property type="entry name" value="TolB_N"/>
    <property type="match status" value="1"/>
</dbReference>
<dbReference type="SUPFAM" id="SSF52964">
    <property type="entry name" value="TolB, N-terminal domain"/>
    <property type="match status" value="1"/>
</dbReference>
<dbReference type="SUPFAM" id="SSF69304">
    <property type="entry name" value="Tricorn protease N-terminal domain"/>
    <property type="match status" value="1"/>
</dbReference>
<accession>Q1MC72</accession>
<proteinExistence type="inferred from homology"/>
<evidence type="ECO:0000255" key="1">
    <source>
        <dbReference type="HAMAP-Rule" id="MF_00671"/>
    </source>
</evidence>
<evidence type="ECO:0000256" key="2">
    <source>
        <dbReference type="SAM" id="MobiDB-lite"/>
    </source>
</evidence>
<comment type="function">
    <text evidence="1">Part of the Tol-Pal system, which plays a role in outer membrane invagination during cell division and is important for maintaining outer membrane integrity.</text>
</comment>
<comment type="subunit">
    <text evidence="1">The Tol-Pal system is composed of five core proteins: the inner membrane proteins TolA, TolQ and TolR, the periplasmic protein TolB and the outer membrane protein Pal. They form a network linking the inner and outer membranes and the peptidoglycan layer.</text>
</comment>
<comment type="subcellular location">
    <subcellularLocation>
        <location evidence="1">Periplasm</location>
    </subcellularLocation>
</comment>
<comment type="similarity">
    <text evidence="1">Belongs to the TolB family.</text>
</comment>
<reference key="1">
    <citation type="journal article" date="2006" name="Genome Biol.">
        <title>The genome of Rhizobium leguminosarum has recognizable core and accessory components.</title>
        <authorList>
            <person name="Young J.P.W."/>
            <person name="Crossman L.C."/>
            <person name="Johnston A.W.B."/>
            <person name="Thomson N.R."/>
            <person name="Ghazoui Z.F."/>
            <person name="Hull K.H."/>
            <person name="Wexler M."/>
            <person name="Curson A.R.J."/>
            <person name="Todd J.D."/>
            <person name="Poole P.S."/>
            <person name="Mauchline T.H."/>
            <person name="East A.K."/>
            <person name="Quail M.A."/>
            <person name="Churcher C."/>
            <person name="Arrowsmith C."/>
            <person name="Cherevach I."/>
            <person name="Chillingworth T."/>
            <person name="Clarke K."/>
            <person name="Cronin A."/>
            <person name="Davis P."/>
            <person name="Fraser A."/>
            <person name="Hance Z."/>
            <person name="Hauser H."/>
            <person name="Jagels K."/>
            <person name="Moule S."/>
            <person name="Mungall K."/>
            <person name="Norbertczak H."/>
            <person name="Rabbinowitsch E."/>
            <person name="Sanders M."/>
            <person name="Simmonds M."/>
            <person name="Whitehead S."/>
            <person name="Parkhill J."/>
        </authorList>
    </citation>
    <scope>NUCLEOTIDE SEQUENCE [LARGE SCALE GENOMIC DNA]</scope>
    <source>
        <strain>DSM 114642 / LMG 32736 / 3841</strain>
    </source>
</reference>
<keyword id="KW-0131">Cell cycle</keyword>
<keyword id="KW-0132">Cell division</keyword>
<keyword id="KW-0574">Periplasm</keyword>
<keyword id="KW-0732">Signal</keyword>
<name>TOLB_RHIJ3</name>
<protein>
    <recommendedName>
        <fullName evidence="1">Tol-Pal system protein TolB</fullName>
    </recommendedName>
</protein>